<organism>
    <name type="scientific">Cryptococcus neoformans var. neoformans serotype D (strain JEC21 / ATCC MYA-565)</name>
    <name type="common">Filobasidiella neoformans</name>
    <dbReference type="NCBI Taxonomy" id="214684"/>
    <lineage>
        <taxon>Eukaryota</taxon>
        <taxon>Fungi</taxon>
        <taxon>Dikarya</taxon>
        <taxon>Basidiomycota</taxon>
        <taxon>Agaricomycotina</taxon>
        <taxon>Tremellomycetes</taxon>
        <taxon>Tremellales</taxon>
        <taxon>Cryptococcaceae</taxon>
        <taxon>Cryptococcus</taxon>
        <taxon>Cryptococcus neoformans species complex</taxon>
    </lineage>
</organism>
<sequence length="548" mass="59903">MAEQQTTELTNIDLEAGSEWRFELEADENIALRTLSSDPVFINSQELTPSAWYPIYRHTKSALYAPTSARIQVTNLPASHYTSTSTVQPQLLNLHLAMERQRILSKRGMEQRGPRVMIMGPQSSGKTTVMKNLVNLALGTGMGWTPGAIGLDPSSPPNLIPGSLSISTPSHPIPTHHLAHPLGSPPASTAANTISGDVETASWWLGALEPTNKNAEVWRVLVEHMAEAWGMRCEKDKIANISGLFLDTPAAFTVPTLGTKKDDPKARYTLVSHAIQAFDIDTIIVIGHEKLHIDLSRLPLVQSRQLNVIRIPKSGGAVDLDDHDRETAHIFQVRTYFYGEPPLPPQISSLVGKMVSLDFELSPYSFQIPWSRLVVLRVGEENSAPSSALPLGSSKILSPLRLTRVDPSGPGHVVRLLNRVLALVDVKPEDRIVPAKESEVKEEVKEEKNEKDGEIKQDGEGEKKGEGKGEGEGEGEGKDGEEEGEAEGEDDEEEVPFREEIGTREVMGFIVITAIDTFARKYTVLSPTPGRLPTTVAIAGAIEWVDSA</sequence>
<comment type="function">
    <text evidence="1">Required for endonucleolytic cleavage during polyadenylation-dependent pre-mRNA 3'-end formation.</text>
</comment>
<comment type="subunit">
    <text evidence="1">Component of a pre-mRNA cleavage factor complex. Interacts directly with PCF11.</text>
</comment>
<comment type="subcellular location">
    <subcellularLocation>
        <location evidence="1">Nucleus</location>
    </subcellularLocation>
</comment>
<comment type="similarity">
    <text evidence="1">Belongs to the Clp1 family. Clp1 subfamily.</text>
</comment>
<comment type="caution">
    <text evidence="3">May lack the polyribonucleotide 5'-hydroxyl-kinase and polynucleotide 5'-hydroxyl-kinase activities that are characteristic of the human ortholog.</text>
</comment>
<name>CLP1_CRYNJ</name>
<evidence type="ECO:0000255" key="1">
    <source>
        <dbReference type="HAMAP-Rule" id="MF_03035"/>
    </source>
</evidence>
<evidence type="ECO:0000256" key="2">
    <source>
        <dbReference type="SAM" id="MobiDB-lite"/>
    </source>
</evidence>
<evidence type="ECO:0000305" key="3"/>
<accession>P0CM76</accession>
<accession>Q55RV6</accession>
<accession>Q5KGA9</accession>
<feature type="chain" id="PRO_0000375203" description="mRNA cleavage and polyadenylation factor CLP1">
    <location>
        <begin position="1"/>
        <end position="548"/>
    </location>
</feature>
<feature type="region of interest" description="Disordered" evidence="2">
    <location>
        <begin position="437"/>
        <end position="500"/>
    </location>
</feature>
<feature type="compositionally biased region" description="Basic and acidic residues" evidence="2">
    <location>
        <begin position="437"/>
        <end position="478"/>
    </location>
</feature>
<feature type="compositionally biased region" description="Acidic residues" evidence="2">
    <location>
        <begin position="479"/>
        <end position="494"/>
    </location>
</feature>
<feature type="binding site" evidence="1">
    <location>
        <position position="19"/>
    </location>
    <ligand>
        <name>ATP</name>
        <dbReference type="ChEBI" id="CHEBI:30616"/>
    </ligand>
</feature>
<feature type="binding site" evidence="1">
    <location>
        <position position="60"/>
    </location>
    <ligand>
        <name>ATP</name>
        <dbReference type="ChEBI" id="CHEBI:30616"/>
    </ligand>
</feature>
<feature type="binding site" evidence="1">
    <location>
        <begin position="123"/>
        <end position="128"/>
    </location>
    <ligand>
        <name>ATP</name>
        <dbReference type="ChEBI" id="CHEBI:30616"/>
    </ligand>
</feature>
<proteinExistence type="inferred from homology"/>
<reference key="1">
    <citation type="journal article" date="2005" name="Science">
        <title>The genome of the basidiomycetous yeast and human pathogen Cryptococcus neoformans.</title>
        <authorList>
            <person name="Loftus B.J."/>
            <person name="Fung E."/>
            <person name="Roncaglia P."/>
            <person name="Rowley D."/>
            <person name="Amedeo P."/>
            <person name="Bruno D."/>
            <person name="Vamathevan J."/>
            <person name="Miranda M."/>
            <person name="Anderson I.J."/>
            <person name="Fraser J.A."/>
            <person name="Allen J.E."/>
            <person name="Bosdet I.E."/>
            <person name="Brent M.R."/>
            <person name="Chiu R."/>
            <person name="Doering T.L."/>
            <person name="Donlin M.J."/>
            <person name="D'Souza C.A."/>
            <person name="Fox D.S."/>
            <person name="Grinberg V."/>
            <person name="Fu J."/>
            <person name="Fukushima M."/>
            <person name="Haas B.J."/>
            <person name="Huang J.C."/>
            <person name="Janbon G."/>
            <person name="Jones S.J.M."/>
            <person name="Koo H.L."/>
            <person name="Krzywinski M.I."/>
            <person name="Kwon-Chung K.J."/>
            <person name="Lengeler K.B."/>
            <person name="Maiti R."/>
            <person name="Marra M.A."/>
            <person name="Marra R.E."/>
            <person name="Mathewson C.A."/>
            <person name="Mitchell T.G."/>
            <person name="Pertea M."/>
            <person name="Riggs F.R."/>
            <person name="Salzberg S.L."/>
            <person name="Schein J.E."/>
            <person name="Shvartsbeyn A."/>
            <person name="Shin H."/>
            <person name="Shumway M."/>
            <person name="Specht C.A."/>
            <person name="Suh B.B."/>
            <person name="Tenney A."/>
            <person name="Utterback T.R."/>
            <person name="Wickes B.L."/>
            <person name="Wortman J.R."/>
            <person name="Wye N.H."/>
            <person name="Kronstad J.W."/>
            <person name="Lodge J.K."/>
            <person name="Heitman J."/>
            <person name="Davis R.W."/>
            <person name="Fraser C.M."/>
            <person name="Hyman R.W."/>
        </authorList>
    </citation>
    <scope>NUCLEOTIDE SEQUENCE [LARGE SCALE GENOMIC DNA]</scope>
    <source>
        <strain>JEC21 / ATCC MYA-565</strain>
    </source>
</reference>
<gene>
    <name evidence="1" type="primary">CLP1</name>
    <name type="ordered locus">CNE04260</name>
</gene>
<protein>
    <recommendedName>
        <fullName evidence="1">mRNA cleavage and polyadenylation factor CLP1</fullName>
    </recommendedName>
</protein>
<keyword id="KW-0067">ATP-binding</keyword>
<keyword id="KW-0507">mRNA processing</keyword>
<keyword id="KW-0547">Nucleotide-binding</keyword>
<keyword id="KW-0539">Nucleus</keyword>
<keyword id="KW-1185">Reference proteome</keyword>
<dbReference type="EMBL" id="AE017345">
    <property type="protein sequence ID" value="AAW43773.1"/>
    <property type="molecule type" value="Genomic_DNA"/>
</dbReference>
<dbReference type="RefSeq" id="XP_571080.1">
    <property type="nucleotide sequence ID" value="XM_571080.1"/>
</dbReference>
<dbReference type="SMR" id="P0CM76"/>
<dbReference type="FunCoup" id="P0CM76">
    <property type="interactions" value="547"/>
</dbReference>
<dbReference type="STRING" id="214684.P0CM76"/>
<dbReference type="PaxDb" id="214684-P0CM76"/>
<dbReference type="EnsemblFungi" id="AAW43773">
    <property type="protein sequence ID" value="AAW43773"/>
    <property type="gene ID" value="CNE04260"/>
</dbReference>
<dbReference type="GeneID" id="3257560"/>
<dbReference type="KEGG" id="cne:CNE04260"/>
<dbReference type="VEuPathDB" id="FungiDB:CNE04260"/>
<dbReference type="eggNOG" id="KOG2749">
    <property type="taxonomic scope" value="Eukaryota"/>
</dbReference>
<dbReference type="HOGENOM" id="CLU_018195_3_1_1"/>
<dbReference type="InParanoid" id="P0CM76"/>
<dbReference type="OMA" id="VQYVNCH"/>
<dbReference type="OrthoDB" id="258143at2759"/>
<dbReference type="Proteomes" id="UP000002149">
    <property type="component" value="Chromosome 5"/>
</dbReference>
<dbReference type="GO" id="GO:0005849">
    <property type="term" value="C:mRNA cleavage factor complex"/>
    <property type="evidence" value="ECO:0007669"/>
    <property type="project" value="UniProtKB-UniRule"/>
</dbReference>
<dbReference type="GO" id="GO:0005634">
    <property type="term" value="C:nucleus"/>
    <property type="evidence" value="ECO:0000318"/>
    <property type="project" value="GO_Central"/>
</dbReference>
<dbReference type="GO" id="GO:0005524">
    <property type="term" value="F:ATP binding"/>
    <property type="evidence" value="ECO:0007669"/>
    <property type="project" value="UniProtKB-UniRule"/>
</dbReference>
<dbReference type="GO" id="GO:0016887">
    <property type="term" value="F:ATP hydrolysis activity"/>
    <property type="evidence" value="ECO:0007669"/>
    <property type="project" value="InterPro"/>
</dbReference>
<dbReference type="GO" id="GO:0051731">
    <property type="term" value="F:polynucleotide 5'-hydroxyl-kinase activity"/>
    <property type="evidence" value="ECO:0000318"/>
    <property type="project" value="GO_Central"/>
</dbReference>
<dbReference type="GO" id="GO:0031124">
    <property type="term" value="P:mRNA 3'-end processing"/>
    <property type="evidence" value="ECO:0007669"/>
    <property type="project" value="UniProtKB-UniRule"/>
</dbReference>
<dbReference type="GO" id="GO:0006388">
    <property type="term" value="P:tRNA splicing, via endonucleolytic cleavage and ligation"/>
    <property type="evidence" value="ECO:0000318"/>
    <property type="project" value="GO_Central"/>
</dbReference>
<dbReference type="Gene3D" id="2.60.120.1030">
    <property type="entry name" value="Clp1, DNA binding domain"/>
    <property type="match status" value="1"/>
</dbReference>
<dbReference type="Gene3D" id="3.40.50.300">
    <property type="entry name" value="P-loop containing nucleotide triphosphate hydrolases"/>
    <property type="match status" value="1"/>
</dbReference>
<dbReference type="Gene3D" id="2.40.30.330">
    <property type="entry name" value="Pre-mRNA cleavage complex subunit Clp1, C-terminal domain"/>
    <property type="match status" value="1"/>
</dbReference>
<dbReference type="HAMAP" id="MF_03035">
    <property type="entry name" value="Clp1"/>
    <property type="match status" value="1"/>
</dbReference>
<dbReference type="InterPro" id="IPR003593">
    <property type="entry name" value="AAA+_ATPase"/>
</dbReference>
<dbReference type="InterPro" id="IPR028606">
    <property type="entry name" value="Clp1"/>
</dbReference>
<dbReference type="InterPro" id="IPR045116">
    <property type="entry name" value="Clp1/Grc3"/>
</dbReference>
<dbReference type="InterPro" id="IPR010655">
    <property type="entry name" value="Clp1_C"/>
</dbReference>
<dbReference type="InterPro" id="IPR038238">
    <property type="entry name" value="Clp1_C_sf"/>
</dbReference>
<dbReference type="InterPro" id="IPR032324">
    <property type="entry name" value="Clp1_N"/>
</dbReference>
<dbReference type="InterPro" id="IPR038239">
    <property type="entry name" value="Clp1_N_sf"/>
</dbReference>
<dbReference type="InterPro" id="IPR032319">
    <property type="entry name" value="CLP1_P"/>
</dbReference>
<dbReference type="InterPro" id="IPR027417">
    <property type="entry name" value="P-loop_NTPase"/>
</dbReference>
<dbReference type="PANTHER" id="PTHR12755">
    <property type="entry name" value="CLEAVAGE/POLYADENYLATION FACTOR IA SUBUNIT CLP1P"/>
    <property type="match status" value="1"/>
</dbReference>
<dbReference type="PANTHER" id="PTHR12755:SF6">
    <property type="entry name" value="POLYRIBONUCLEOTIDE 5'-HYDROXYL-KINASE CLP1"/>
    <property type="match status" value="1"/>
</dbReference>
<dbReference type="Pfam" id="PF06807">
    <property type="entry name" value="Clp1"/>
    <property type="match status" value="2"/>
</dbReference>
<dbReference type="Pfam" id="PF16573">
    <property type="entry name" value="CLP1_N"/>
    <property type="match status" value="1"/>
</dbReference>
<dbReference type="Pfam" id="PF16575">
    <property type="entry name" value="CLP1_P"/>
    <property type="match status" value="1"/>
</dbReference>
<dbReference type="SMART" id="SM00382">
    <property type="entry name" value="AAA"/>
    <property type="match status" value="1"/>
</dbReference>
<dbReference type="SUPFAM" id="SSF52540">
    <property type="entry name" value="P-loop containing nucleoside triphosphate hydrolases"/>
    <property type="match status" value="1"/>
</dbReference>